<keyword id="KW-0028">Amino-acid biosynthesis</keyword>
<keyword id="KW-0057">Aromatic amino acid biosynthesis</keyword>
<keyword id="KW-0067">ATP-binding</keyword>
<keyword id="KW-0963">Cytoplasm</keyword>
<keyword id="KW-0418">Kinase</keyword>
<keyword id="KW-0456">Lyase</keyword>
<keyword id="KW-0479">Metal-binding</keyword>
<keyword id="KW-0511">Multifunctional enzyme</keyword>
<keyword id="KW-0521">NADP</keyword>
<keyword id="KW-0547">Nucleotide-binding</keyword>
<keyword id="KW-0560">Oxidoreductase</keyword>
<keyword id="KW-0808">Transferase</keyword>
<keyword id="KW-0862">Zinc</keyword>
<name>ARO1_YEAS8</name>
<reference key="1">
    <citation type="journal article" date="2009" name="Proc. Natl. Acad. Sci. U.S.A.">
        <title>Eukaryote-to-eukaryote gene transfer events revealed by the genome sequence of the wine yeast Saccharomyces cerevisiae EC1118.</title>
        <authorList>
            <person name="Novo M."/>
            <person name="Bigey F."/>
            <person name="Beyne E."/>
            <person name="Galeote V."/>
            <person name="Gavory F."/>
            <person name="Mallet S."/>
            <person name="Cambon B."/>
            <person name="Legras J.-L."/>
            <person name="Wincker P."/>
            <person name="Casaregola S."/>
            <person name="Dequin S."/>
        </authorList>
    </citation>
    <scope>NUCLEOTIDE SEQUENCE [LARGE SCALE GENOMIC DNA]</scope>
    <source>
        <strain>Lalvin EC1118 / Prise de mousse</strain>
    </source>
</reference>
<protein>
    <recommendedName>
        <fullName evidence="1">Pentafunctional AROM polypeptide</fullName>
    </recommendedName>
    <domain>
        <recommendedName>
            <fullName evidence="1">3-dehydroquinate synthase</fullName>
            <shortName evidence="1">DHQS</shortName>
            <ecNumber evidence="1">4.2.3.4</ecNumber>
        </recommendedName>
    </domain>
    <domain>
        <recommendedName>
            <fullName evidence="1">3-phosphoshikimate 1-carboxyvinyltransferase</fullName>
            <ecNumber evidence="1">2.5.1.19</ecNumber>
        </recommendedName>
        <alternativeName>
            <fullName evidence="1">5-enolpyruvylshikimate-3-phosphate synthase</fullName>
            <shortName evidence="1">EPSP synthase</shortName>
            <shortName evidence="1">EPSPS</shortName>
        </alternativeName>
    </domain>
    <domain>
        <recommendedName>
            <fullName evidence="1">Shikimate kinase</fullName>
            <shortName evidence="1">SK</shortName>
            <ecNumber evidence="1">2.7.1.71</ecNumber>
        </recommendedName>
    </domain>
    <domain>
        <recommendedName>
            <fullName evidence="1">3-dehydroquinate dehydratase</fullName>
            <shortName evidence="1">3-dehydroquinase</shortName>
            <ecNumber evidence="1">4.2.1.10</ecNumber>
        </recommendedName>
    </domain>
    <domain>
        <recommendedName>
            <fullName evidence="1">Shikimate dehydrogenase</fullName>
            <ecNumber evidence="1">1.1.1.25</ecNumber>
        </recommendedName>
    </domain>
</protein>
<accession>C8Z543</accession>
<comment type="function">
    <text evidence="1">The AROM polypeptide catalyzes 5 consecutive enzymatic reactions in prechorismate polyaromatic amino acid biosynthesis.</text>
</comment>
<comment type="catalytic activity">
    <reaction evidence="1">
        <text>7-phospho-2-dehydro-3-deoxy-D-arabino-heptonate = 3-dehydroquinate + phosphate</text>
        <dbReference type="Rhea" id="RHEA:21968"/>
        <dbReference type="ChEBI" id="CHEBI:32364"/>
        <dbReference type="ChEBI" id="CHEBI:43474"/>
        <dbReference type="ChEBI" id="CHEBI:58394"/>
        <dbReference type="EC" id="4.2.3.4"/>
    </reaction>
</comment>
<comment type="catalytic activity">
    <reaction evidence="1">
        <text>3-dehydroquinate = 3-dehydroshikimate + H2O</text>
        <dbReference type="Rhea" id="RHEA:21096"/>
        <dbReference type="ChEBI" id="CHEBI:15377"/>
        <dbReference type="ChEBI" id="CHEBI:16630"/>
        <dbReference type="ChEBI" id="CHEBI:32364"/>
        <dbReference type="EC" id="4.2.1.10"/>
    </reaction>
</comment>
<comment type="catalytic activity">
    <reaction evidence="1">
        <text>shikimate + NADP(+) = 3-dehydroshikimate + NADPH + H(+)</text>
        <dbReference type="Rhea" id="RHEA:17737"/>
        <dbReference type="ChEBI" id="CHEBI:15378"/>
        <dbReference type="ChEBI" id="CHEBI:16630"/>
        <dbReference type="ChEBI" id="CHEBI:36208"/>
        <dbReference type="ChEBI" id="CHEBI:57783"/>
        <dbReference type="ChEBI" id="CHEBI:58349"/>
        <dbReference type="EC" id="1.1.1.25"/>
    </reaction>
</comment>
<comment type="catalytic activity">
    <reaction evidence="1">
        <text>shikimate + ATP = 3-phosphoshikimate + ADP + H(+)</text>
        <dbReference type="Rhea" id="RHEA:13121"/>
        <dbReference type="ChEBI" id="CHEBI:15378"/>
        <dbReference type="ChEBI" id="CHEBI:30616"/>
        <dbReference type="ChEBI" id="CHEBI:36208"/>
        <dbReference type="ChEBI" id="CHEBI:145989"/>
        <dbReference type="ChEBI" id="CHEBI:456216"/>
        <dbReference type="EC" id="2.7.1.71"/>
    </reaction>
</comment>
<comment type="catalytic activity">
    <reaction evidence="1">
        <text>3-phosphoshikimate + phosphoenolpyruvate = 5-O-(1-carboxyvinyl)-3-phosphoshikimate + phosphate</text>
        <dbReference type="Rhea" id="RHEA:21256"/>
        <dbReference type="ChEBI" id="CHEBI:43474"/>
        <dbReference type="ChEBI" id="CHEBI:57701"/>
        <dbReference type="ChEBI" id="CHEBI:58702"/>
        <dbReference type="ChEBI" id="CHEBI:145989"/>
        <dbReference type="EC" id="2.5.1.19"/>
    </reaction>
</comment>
<comment type="cofactor">
    <cofactor>
        <name>Zn(2+)</name>
        <dbReference type="ChEBI" id="CHEBI:29105"/>
    </cofactor>
    <text>Binds 2 Zn(2+) ions per subunit.</text>
</comment>
<comment type="pathway">
    <text evidence="1">Metabolic intermediate biosynthesis; chorismate biosynthesis; chorismate from D-erythrose 4-phosphate and phosphoenolpyruvate: step 2/7.</text>
</comment>
<comment type="pathway">
    <text evidence="1">Metabolic intermediate biosynthesis; chorismate biosynthesis; chorismate from D-erythrose 4-phosphate and phosphoenolpyruvate: step 3/7.</text>
</comment>
<comment type="pathway">
    <text evidence="1">Metabolic intermediate biosynthesis; chorismate biosynthesis; chorismate from D-erythrose 4-phosphate and phosphoenolpyruvate: step 4/7.</text>
</comment>
<comment type="pathway">
    <text evidence="1">Metabolic intermediate biosynthesis; chorismate biosynthesis; chorismate from D-erythrose 4-phosphate and phosphoenolpyruvate: step 5/7.</text>
</comment>
<comment type="pathway">
    <text evidence="1">Metabolic intermediate biosynthesis; chorismate biosynthesis; chorismate from D-erythrose 4-phosphate and phosphoenolpyruvate: step 6/7.</text>
</comment>
<comment type="subunit">
    <text evidence="1">Homodimer.</text>
</comment>
<comment type="subcellular location">
    <subcellularLocation>
        <location evidence="1">Cytoplasm</location>
    </subcellularLocation>
</comment>
<comment type="similarity">
    <text evidence="1">In the N-terminal section; belongs to the sugar phosphate cyclases superfamily. Dehydroquinate synthase family.</text>
</comment>
<comment type="similarity">
    <text evidence="1">In the 2nd section; belongs to the EPSP synthase family.</text>
</comment>
<comment type="similarity">
    <text evidence="1">In the 3rd section; belongs to the shikimate kinase family.</text>
</comment>
<comment type="similarity">
    <text evidence="1">In the 4th section; belongs to the type-I 3-dehydroquinase family.</text>
</comment>
<comment type="similarity">
    <text evidence="1">In the C-terminal section; belongs to the shikimate dehydrogenase family.</text>
</comment>
<gene>
    <name evidence="1" type="primary">ARO1</name>
    <name type="ORF">EC1118_1D0_3829g</name>
</gene>
<feature type="chain" id="PRO_0000406751" description="Pentafunctional AROM polypeptide">
    <location>
        <begin position="1"/>
        <end position="1588"/>
    </location>
</feature>
<feature type="region of interest" description="3-dehydroquinate synthase">
    <location>
        <begin position="1"/>
        <end position="392"/>
    </location>
</feature>
<feature type="region of interest" description="EPSP synthase">
    <location>
        <begin position="405"/>
        <end position="871"/>
    </location>
</feature>
<feature type="region of interest" description="Shikimate kinase">
    <location>
        <begin position="890"/>
        <end position="1080"/>
    </location>
</feature>
<feature type="region of interest" description="3-dehydroquinase">
    <location>
        <begin position="1081"/>
        <end position="1293"/>
    </location>
</feature>
<feature type="region of interest" description="Shikimate dehydrogenase">
    <location>
        <begin position="1306"/>
        <end position="1588"/>
    </location>
</feature>
<feature type="active site" description="Proton acceptor; for 3-dehydroquinate synthase activity" evidence="1">
    <location>
        <position position="268"/>
    </location>
</feature>
<feature type="active site" description="Proton acceptor; for 3-dehydroquinate synthase activity" evidence="1">
    <location>
        <position position="283"/>
    </location>
</feature>
<feature type="active site" description="For EPSP synthase activity" evidence="1">
    <location>
        <position position="853"/>
    </location>
</feature>
<feature type="active site" description="Proton acceptor; for 3-dehydroquinate dehydratase activity" evidence="1">
    <location>
        <position position="1198"/>
    </location>
</feature>
<feature type="active site" description="Schiff-base intermediate with substrate; for 3-dehydroquinate dehydratase activity" evidence="1">
    <location>
        <position position="1227"/>
    </location>
</feature>
<feature type="binding site" evidence="1">
    <location>
        <begin position="43"/>
        <end position="45"/>
    </location>
    <ligand>
        <name>NAD(+)</name>
        <dbReference type="ChEBI" id="CHEBI:57540"/>
    </ligand>
</feature>
<feature type="binding site" evidence="1">
    <location>
        <begin position="78"/>
        <end position="81"/>
    </location>
    <ligand>
        <name>NAD(+)</name>
        <dbReference type="ChEBI" id="CHEBI:57540"/>
    </ligand>
</feature>
<feature type="binding site" evidence="1">
    <location>
        <begin position="109"/>
        <end position="111"/>
    </location>
    <ligand>
        <name>NAD(+)</name>
        <dbReference type="ChEBI" id="CHEBI:57540"/>
    </ligand>
</feature>
<feature type="binding site" evidence="1">
    <location>
        <position position="114"/>
    </location>
    <ligand>
        <name>NAD(+)</name>
        <dbReference type="ChEBI" id="CHEBI:57540"/>
    </ligand>
</feature>
<feature type="binding site" evidence="1">
    <location>
        <position position="125"/>
    </location>
    <ligand>
        <name>7-phospho-2-dehydro-3-deoxy-D-arabino-heptonate</name>
        <dbReference type="ChEBI" id="CHEBI:58394"/>
    </ligand>
</feature>
<feature type="binding site" evidence="1">
    <location>
        <begin position="134"/>
        <end position="135"/>
    </location>
    <ligand>
        <name>NAD(+)</name>
        <dbReference type="ChEBI" id="CHEBI:57540"/>
    </ligand>
</feature>
<feature type="binding site" evidence="1">
    <location>
        <position position="141"/>
    </location>
    <ligand>
        <name>7-phospho-2-dehydro-3-deoxy-D-arabino-heptonate</name>
        <dbReference type="ChEBI" id="CHEBI:58394"/>
    </ligand>
</feature>
<feature type="binding site" evidence="1">
    <location>
        <position position="147"/>
    </location>
    <ligand>
        <name>7-phospho-2-dehydro-3-deoxy-D-arabino-heptonate</name>
        <dbReference type="ChEBI" id="CHEBI:58394"/>
    </ligand>
</feature>
<feature type="binding site" evidence="1">
    <location>
        <position position="156"/>
    </location>
    <ligand>
        <name>NAD(+)</name>
        <dbReference type="ChEBI" id="CHEBI:57540"/>
    </ligand>
</feature>
<feature type="binding site" evidence="1">
    <location>
        <position position="157"/>
    </location>
    <ligand>
        <name>7-phospho-2-dehydro-3-deoxy-D-arabino-heptonate</name>
        <dbReference type="ChEBI" id="CHEBI:58394"/>
    </ligand>
</feature>
<feature type="binding site" evidence="1">
    <location>
        <begin position="174"/>
        <end position="177"/>
    </location>
    <ligand>
        <name>NAD(+)</name>
        <dbReference type="ChEBI" id="CHEBI:57540"/>
    </ligand>
</feature>
<feature type="binding site" evidence="1">
    <location>
        <position position="185"/>
    </location>
    <ligand>
        <name>NAD(+)</name>
        <dbReference type="ChEBI" id="CHEBI:57540"/>
    </ligand>
</feature>
<feature type="binding site" evidence="1">
    <location>
        <begin position="189"/>
        <end position="192"/>
    </location>
    <ligand>
        <name>7-phospho-2-dehydro-3-deoxy-D-arabino-heptonate</name>
        <dbReference type="ChEBI" id="CHEBI:58394"/>
    </ligand>
</feature>
<feature type="binding site" evidence="1">
    <location>
        <position position="189"/>
    </location>
    <ligand>
        <name>Zn(2+)</name>
        <dbReference type="ChEBI" id="CHEBI:29105"/>
        <note>catalytic</note>
    </ligand>
</feature>
<feature type="binding site" evidence="1">
    <location>
        <position position="258"/>
    </location>
    <ligand>
        <name>7-phospho-2-dehydro-3-deoxy-D-arabino-heptonate</name>
        <dbReference type="ChEBI" id="CHEBI:58394"/>
    </ligand>
</feature>
<feature type="binding site" evidence="1">
    <location>
        <begin position="272"/>
        <end position="276"/>
    </location>
    <ligand>
        <name>7-phospho-2-dehydro-3-deoxy-D-arabino-heptonate</name>
        <dbReference type="ChEBI" id="CHEBI:58394"/>
    </ligand>
</feature>
<feature type="binding site" evidence="1">
    <location>
        <position position="279"/>
    </location>
    <ligand>
        <name>7-phospho-2-dehydro-3-deoxy-D-arabino-heptonate</name>
        <dbReference type="ChEBI" id="CHEBI:58394"/>
    </ligand>
</feature>
<feature type="binding site" evidence="1">
    <location>
        <position position="279"/>
    </location>
    <ligand>
        <name>Zn(2+)</name>
        <dbReference type="ChEBI" id="CHEBI:29105"/>
        <note>catalytic</note>
    </ligand>
</feature>
<feature type="binding site" evidence="1">
    <location>
        <position position="295"/>
    </location>
    <ligand>
        <name>7-phospho-2-dehydro-3-deoxy-D-arabino-heptonate</name>
        <dbReference type="ChEBI" id="CHEBI:58394"/>
    </ligand>
</feature>
<feature type="binding site" evidence="1">
    <location>
        <position position="295"/>
    </location>
    <ligand>
        <name>Zn(2+)</name>
        <dbReference type="ChEBI" id="CHEBI:29105"/>
        <note>catalytic</note>
    </ligand>
</feature>
<feature type="binding site" evidence="1">
    <location>
        <position position="364"/>
    </location>
    <ligand>
        <name>7-phospho-2-dehydro-3-deoxy-D-arabino-heptonate</name>
        <dbReference type="ChEBI" id="CHEBI:58394"/>
    </ligand>
</feature>
<feature type="binding site" evidence="1">
    <location>
        <begin position="895"/>
        <end position="902"/>
    </location>
    <ligand>
        <name>ATP</name>
        <dbReference type="ChEBI" id="CHEBI:30616"/>
    </ligand>
</feature>
<sequence length="1588" mass="174739">MVQLAKVPILGNDIIHVGYNIHDHLVETIIKHCPSSTYVICNDTNLSKVPYYQQLVLEFKASLPEGSRLLTYVVKPGETSKSRETKAQLEDYLLVEGCTRDTVMVAIGGGVIGDMIGFVASTFMRGVRVVQVPTSLLAMVDSSIGGKTAIDTPLGKNFIGAFWQPKFVLVDIKWLETLAKREFINGMAEVIKTACIWNADEFTRLESNASLFLNVVNGAKNVKVTNQLTNEIDEISNTDIEAMLDHTYKLVLESIKVKAEVVSSDERESSLRNLLNFGHSIGHAYEAILTPQALHGECVSIGMVKEAELSRYFGILSPTQVARLSKILVAYGLPVSPDEKWFKELTLHKKTPLDILLKKMSIDKKNEGSKKKVVILESIGKCYGDSAQFVSDEDLRFILTDETLVYPFKDIPADQQKVVIPPGSKSISNRALILAALGEGQCKIKNLLHSDDTKHMLTAVHELKGATISWEDNGETVVVEGHGGSTLSACADPLYLGNAGTASRFLTSLAALVNSTPSQKYIVLTGNARMQQRPIAPLVDSLRANGTKIEYLNNEGSLPIKVYTDSVFKGGRIELAATVSSQYVSSILMCAPYAEEPVTLALVGGKPISKLYVDMTIKMMEKFGINVETSTTEPYTYYIPKGHYINPSEYVIESDASSATYPLAFAAMTGTTVTVPNIGFESLQGDARFARDVLKPMGCKITQTATSTTVSGPPVGTLKPLKHVDMEPMTDAFLTACVVAAISHDSDPNSANTTTIEGIANQRVKECNRILAMATELAKFGVKTTELPDGIQVHGLNSIKDLKVPSDSSGPVGVCTYDDHRVAMSFSLLAGMVNSQNERDEVANPVRILERHCTGKTWPGWWDVLHSELGAKLDGAEPLECTSKKNSKKSVVIIGMRAAGKTTISKWCASALGYKLVDLDELFEQQHNNQSVKQFVVENGWEKFREEETRIFKEVIQNYGDDGYVFSTGGGIVESAESRKALKDFASSGGYVLHLHRDIEETIVFLQSDPSRPAYVEEIREVWNRREGWYKECSNFSFFAPHCSAEAEFQALRRSFSKHIATITGVREIEIPSGRSAFVCLTFDDLTEQTENLTPICYGCEAVEVRVDHLANYSADFVSKQLSILRKATDSIPIIFTVRTMKQGGNFPDEEFKTLRELYDIALKNGVEFLDLELTLPTDIQYEVINKRGNTKIIGSHHDFQGLYSWDDAEWENRFNQALTLDVDVVKFVGTAVNFEDNLRLEHFRDTHKNKPLIAVNMTSKGSISRVLNNVLTPVTSDLLPNSAAPGQLTVAQINKMYTSMGGIEPKELFVVGKPIGHSRSPILHNTGYEILGLPHKFDKFETESAQLVKEKLLDGNKNFGGAAVTIPLKLDIMQYMDELTDAAKVIGAVNTVIPLGNKKFKGDNTDWLGIRNALINNGVPEYVGHTAGLVIGAGGTSRAALYALHSLGCKKIFIINRTTSKLKPLIESLPSEFNIIGIESTKSIEEIKEHVGVAVSCVPADKPLDDELLSKLERFLVKGAHAAFVPTLLEAAYKPSVTPVMTISQDKYQWHVVPGSQMLVHQGVAQFEKWTGFKGPFKAIFDAVTKE</sequence>
<proteinExistence type="inferred from homology"/>
<organism>
    <name type="scientific">Saccharomyces cerevisiae (strain Lalvin EC1118 / Prise de mousse)</name>
    <name type="common">Baker's yeast</name>
    <dbReference type="NCBI Taxonomy" id="643680"/>
    <lineage>
        <taxon>Eukaryota</taxon>
        <taxon>Fungi</taxon>
        <taxon>Dikarya</taxon>
        <taxon>Ascomycota</taxon>
        <taxon>Saccharomycotina</taxon>
        <taxon>Saccharomycetes</taxon>
        <taxon>Saccharomycetales</taxon>
        <taxon>Saccharomycetaceae</taxon>
        <taxon>Saccharomyces</taxon>
    </lineage>
</organism>
<dbReference type="EC" id="4.2.3.4" evidence="1"/>
<dbReference type="EC" id="2.5.1.19" evidence="1"/>
<dbReference type="EC" id="2.7.1.71" evidence="1"/>
<dbReference type="EC" id="4.2.1.10" evidence="1"/>
<dbReference type="EC" id="1.1.1.25" evidence="1"/>
<dbReference type="EMBL" id="FN393063">
    <property type="protein sequence ID" value="CAY78632.1"/>
    <property type="molecule type" value="Genomic_DNA"/>
</dbReference>
<dbReference type="SMR" id="C8Z543"/>
<dbReference type="TopDownProteomics" id="C8Z543"/>
<dbReference type="HOGENOM" id="CLU_001201_1_2_1"/>
<dbReference type="OrthoDB" id="21150at4893"/>
<dbReference type="UniPathway" id="UPA00053">
    <property type="reaction ID" value="UER00085"/>
</dbReference>
<dbReference type="UniPathway" id="UPA00053">
    <property type="reaction ID" value="UER00086"/>
</dbReference>
<dbReference type="UniPathway" id="UPA00053">
    <property type="reaction ID" value="UER00087"/>
</dbReference>
<dbReference type="UniPathway" id="UPA00053">
    <property type="reaction ID" value="UER00088"/>
</dbReference>
<dbReference type="UniPathway" id="UPA00053">
    <property type="reaction ID" value="UER00089"/>
</dbReference>
<dbReference type="Proteomes" id="UP000000286">
    <property type="component" value="Chromosome IV, Scaffold EC1118_1D0"/>
</dbReference>
<dbReference type="GO" id="GO:0005737">
    <property type="term" value="C:cytoplasm"/>
    <property type="evidence" value="ECO:0007669"/>
    <property type="project" value="UniProtKB-SubCell"/>
</dbReference>
<dbReference type="GO" id="GO:0003855">
    <property type="term" value="F:3-dehydroquinate dehydratase activity"/>
    <property type="evidence" value="ECO:0007669"/>
    <property type="project" value="UniProtKB-UniRule"/>
</dbReference>
<dbReference type="GO" id="GO:0003856">
    <property type="term" value="F:3-dehydroquinate synthase activity"/>
    <property type="evidence" value="ECO:0007669"/>
    <property type="project" value="UniProtKB-UniRule"/>
</dbReference>
<dbReference type="GO" id="GO:0003866">
    <property type="term" value="F:3-phosphoshikimate 1-carboxyvinyltransferase activity"/>
    <property type="evidence" value="ECO:0007669"/>
    <property type="project" value="UniProtKB-UniRule"/>
</dbReference>
<dbReference type="GO" id="GO:0005524">
    <property type="term" value="F:ATP binding"/>
    <property type="evidence" value="ECO:0007669"/>
    <property type="project" value="UniProtKB-UniRule"/>
</dbReference>
<dbReference type="GO" id="GO:0046872">
    <property type="term" value="F:metal ion binding"/>
    <property type="evidence" value="ECO:0007669"/>
    <property type="project" value="UniProtKB-UniRule"/>
</dbReference>
<dbReference type="GO" id="GO:0004764">
    <property type="term" value="F:shikimate 3-dehydrogenase (NADP+) activity"/>
    <property type="evidence" value="ECO:0007669"/>
    <property type="project" value="UniProtKB-UniRule"/>
</dbReference>
<dbReference type="GO" id="GO:0004765">
    <property type="term" value="F:shikimate kinase activity"/>
    <property type="evidence" value="ECO:0007669"/>
    <property type="project" value="UniProtKB-UniRule"/>
</dbReference>
<dbReference type="GO" id="GO:0008652">
    <property type="term" value="P:amino acid biosynthetic process"/>
    <property type="evidence" value="ECO:0007669"/>
    <property type="project" value="UniProtKB-KW"/>
</dbReference>
<dbReference type="GO" id="GO:0009073">
    <property type="term" value="P:aromatic amino acid family biosynthetic process"/>
    <property type="evidence" value="ECO:0007669"/>
    <property type="project" value="UniProtKB-UniRule"/>
</dbReference>
<dbReference type="GO" id="GO:0009423">
    <property type="term" value="P:chorismate biosynthetic process"/>
    <property type="evidence" value="ECO:0007669"/>
    <property type="project" value="UniProtKB-UniRule"/>
</dbReference>
<dbReference type="CDD" id="cd00502">
    <property type="entry name" value="DHQase_I"/>
    <property type="match status" value="1"/>
</dbReference>
<dbReference type="CDD" id="cd08195">
    <property type="entry name" value="DHQS"/>
    <property type="match status" value="1"/>
</dbReference>
<dbReference type="CDD" id="cd01556">
    <property type="entry name" value="EPSP_synthase"/>
    <property type="match status" value="1"/>
</dbReference>
<dbReference type="CDD" id="cd01065">
    <property type="entry name" value="NAD_bind_Shikimate_DH"/>
    <property type="match status" value="1"/>
</dbReference>
<dbReference type="CDD" id="cd00464">
    <property type="entry name" value="SK"/>
    <property type="match status" value="1"/>
</dbReference>
<dbReference type="FunFam" id="1.20.1090.10:FF:000007">
    <property type="entry name" value="Pentafunctional AROM polypeptide"/>
    <property type="match status" value="1"/>
</dbReference>
<dbReference type="FunFam" id="3.20.20.70:FF:000135">
    <property type="entry name" value="Pentafunctional AROM polypeptide"/>
    <property type="match status" value="1"/>
</dbReference>
<dbReference type="FunFam" id="3.40.50.10860:FF:000015">
    <property type="entry name" value="Pentafunctional AROM polypeptide"/>
    <property type="match status" value="1"/>
</dbReference>
<dbReference type="FunFam" id="3.40.50.1970:FF:000007">
    <property type="entry name" value="Pentafunctional AROM polypeptide"/>
    <property type="match status" value="1"/>
</dbReference>
<dbReference type="FunFam" id="3.40.50.300:FF:001256">
    <property type="entry name" value="Pentafunctional AROM polypeptide"/>
    <property type="match status" value="1"/>
</dbReference>
<dbReference type="FunFam" id="3.40.50.720:FF:000484">
    <property type="entry name" value="Pentafunctional AROM polypeptide"/>
    <property type="match status" value="1"/>
</dbReference>
<dbReference type="FunFam" id="3.65.10.10:FF:000007">
    <property type="entry name" value="Pentafunctional AROM polypeptide"/>
    <property type="match status" value="1"/>
</dbReference>
<dbReference type="FunFam" id="3.65.10.10:FF:000008">
    <property type="entry name" value="Pentafunctional AROM polypeptide"/>
    <property type="match status" value="1"/>
</dbReference>
<dbReference type="Gene3D" id="3.40.50.1970">
    <property type="match status" value="1"/>
</dbReference>
<dbReference type="Gene3D" id="3.20.20.70">
    <property type="entry name" value="Aldolase class I"/>
    <property type="match status" value="1"/>
</dbReference>
<dbReference type="Gene3D" id="1.20.1090.10">
    <property type="entry name" value="Dehydroquinate synthase-like - alpha domain"/>
    <property type="match status" value="1"/>
</dbReference>
<dbReference type="Gene3D" id="3.65.10.10">
    <property type="entry name" value="Enolpyruvate transferase domain"/>
    <property type="match status" value="2"/>
</dbReference>
<dbReference type="Gene3D" id="3.40.50.10860">
    <property type="entry name" value="Leucine Dehydrogenase, chain A, domain 1"/>
    <property type="match status" value="1"/>
</dbReference>
<dbReference type="Gene3D" id="3.40.50.720">
    <property type="entry name" value="NAD(P)-binding Rossmann-like Domain"/>
    <property type="match status" value="1"/>
</dbReference>
<dbReference type="Gene3D" id="3.40.50.300">
    <property type="entry name" value="P-loop containing nucleotide triphosphate hydrolases"/>
    <property type="match status" value="1"/>
</dbReference>
<dbReference type="HAMAP" id="MF_00210">
    <property type="entry name" value="EPSP_synth"/>
    <property type="match status" value="1"/>
</dbReference>
<dbReference type="HAMAP" id="MF_03143">
    <property type="entry name" value="Pentafunct_AroM"/>
    <property type="match status" value="1"/>
</dbReference>
<dbReference type="HAMAP" id="MF_00109">
    <property type="entry name" value="Shikimate_kinase"/>
    <property type="match status" value="1"/>
</dbReference>
<dbReference type="InterPro" id="IPR018508">
    <property type="entry name" value="3-dehydroquinate_DH_AS"/>
</dbReference>
<dbReference type="InterPro" id="IPR013785">
    <property type="entry name" value="Aldolase_TIM"/>
</dbReference>
<dbReference type="InterPro" id="IPR046346">
    <property type="entry name" value="Aminoacid_DH-like_N_sf"/>
</dbReference>
<dbReference type="InterPro" id="IPR016037">
    <property type="entry name" value="DHQ_synth_AroB"/>
</dbReference>
<dbReference type="InterPro" id="IPR030960">
    <property type="entry name" value="DHQS/DOIS_N"/>
</dbReference>
<dbReference type="InterPro" id="IPR056179">
    <property type="entry name" value="DHQS_C"/>
</dbReference>
<dbReference type="InterPro" id="IPR001381">
    <property type="entry name" value="DHquinase_I"/>
</dbReference>
<dbReference type="InterPro" id="IPR001986">
    <property type="entry name" value="Enolpyruvate_Tfrase_dom"/>
</dbReference>
<dbReference type="InterPro" id="IPR036968">
    <property type="entry name" value="Enolpyruvate_Tfrase_sf"/>
</dbReference>
<dbReference type="InterPro" id="IPR006264">
    <property type="entry name" value="EPSP_synthase"/>
</dbReference>
<dbReference type="InterPro" id="IPR023193">
    <property type="entry name" value="EPSP_synthase_CS"/>
</dbReference>
<dbReference type="InterPro" id="IPR036291">
    <property type="entry name" value="NAD(P)-bd_dom_sf"/>
</dbReference>
<dbReference type="InterPro" id="IPR027417">
    <property type="entry name" value="P-loop_NTPase"/>
</dbReference>
<dbReference type="InterPro" id="IPR008289">
    <property type="entry name" value="Pentafunct_AroM"/>
</dbReference>
<dbReference type="InterPro" id="IPR013792">
    <property type="entry name" value="RNA3'P_cycl/enolpyr_Trfase_a/b"/>
</dbReference>
<dbReference type="InterPro" id="IPR041121">
    <property type="entry name" value="SDH_C"/>
</dbReference>
<dbReference type="InterPro" id="IPR031322">
    <property type="entry name" value="Shikimate/glucono_kinase"/>
</dbReference>
<dbReference type="InterPro" id="IPR013708">
    <property type="entry name" value="Shikimate_DH-bd_N"/>
</dbReference>
<dbReference type="InterPro" id="IPR010110">
    <property type="entry name" value="Shikimate_DH_AroM-type"/>
</dbReference>
<dbReference type="InterPro" id="IPR000623">
    <property type="entry name" value="Shikimate_kinase/TSH1"/>
</dbReference>
<dbReference type="InterPro" id="IPR023000">
    <property type="entry name" value="Shikimate_kinase_CS"/>
</dbReference>
<dbReference type="InterPro" id="IPR006151">
    <property type="entry name" value="Shikm_DH/Glu-tRNA_Rdtase"/>
</dbReference>
<dbReference type="NCBIfam" id="TIGR01356">
    <property type="entry name" value="aroA"/>
    <property type="match status" value="1"/>
</dbReference>
<dbReference type="NCBIfam" id="TIGR01357">
    <property type="entry name" value="aroB"/>
    <property type="match status" value="1"/>
</dbReference>
<dbReference type="NCBIfam" id="TIGR01093">
    <property type="entry name" value="aroD"/>
    <property type="match status" value="1"/>
</dbReference>
<dbReference type="NCBIfam" id="TIGR01809">
    <property type="entry name" value="Shik-DH-AROM"/>
    <property type="match status" value="1"/>
</dbReference>
<dbReference type="PANTHER" id="PTHR21090">
    <property type="entry name" value="AROM/DEHYDROQUINATE SYNTHASE"/>
    <property type="match status" value="1"/>
</dbReference>
<dbReference type="PANTHER" id="PTHR21090:SF5">
    <property type="entry name" value="PENTAFUNCTIONAL AROM POLYPEPTIDE"/>
    <property type="match status" value="1"/>
</dbReference>
<dbReference type="Pfam" id="PF01761">
    <property type="entry name" value="DHQ_synthase"/>
    <property type="match status" value="1"/>
</dbReference>
<dbReference type="Pfam" id="PF24621">
    <property type="entry name" value="DHQS_C"/>
    <property type="match status" value="1"/>
</dbReference>
<dbReference type="Pfam" id="PF01487">
    <property type="entry name" value="DHquinase_I"/>
    <property type="match status" value="1"/>
</dbReference>
<dbReference type="Pfam" id="PF00275">
    <property type="entry name" value="EPSP_synthase"/>
    <property type="match status" value="1"/>
</dbReference>
<dbReference type="Pfam" id="PF18317">
    <property type="entry name" value="SDH_C"/>
    <property type="match status" value="1"/>
</dbReference>
<dbReference type="Pfam" id="PF01488">
    <property type="entry name" value="Shikimate_DH"/>
    <property type="match status" value="1"/>
</dbReference>
<dbReference type="Pfam" id="PF08501">
    <property type="entry name" value="Shikimate_dh_N"/>
    <property type="match status" value="1"/>
</dbReference>
<dbReference type="Pfam" id="PF01202">
    <property type="entry name" value="SKI"/>
    <property type="match status" value="1"/>
</dbReference>
<dbReference type="PIRSF" id="PIRSF000514">
    <property type="entry name" value="Pentafunct_AroM"/>
    <property type="match status" value="1"/>
</dbReference>
<dbReference type="PRINTS" id="PR01100">
    <property type="entry name" value="SHIKIMTKNASE"/>
</dbReference>
<dbReference type="SUPFAM" id="SSF51569">
    <property type="entry name" value="Aldolase"/>
    <property type="match status" value="1"/>
</dbReference>
<dbReference type="SUPFAM" id="SSF53223">
    <property type="entry name" value="Aminoacid dehydrogenase-like, N-terminal domain"/>
    <property type="match status" value="1"/>
</dbReference>
<dbReference type="SUPFAM" id="SSF56796">
    <property type="entry name" value="Dehydroquinate synthase-like"/>
    <property type="match status" value="1"/>
</dbReference>
<dbReference type="SUPFAM" id="SSF55205">
    <property type="entry name" value="EPT/RTPC-like"/>
    <property type="match status" value="1"/>
</dbReference>
<dbReference type="SUPFAM" id="SSF51735">
    <property type="entry name" value="NAD(P)-binding Rossmann-fold domains"/>
    <property type="match status" value="1"/>
</dbReference>
<dbReference type="SUPFAM" id="SSF52540">
    <property type="entry name" value="P-loop containing nucleoside triphosphate hydrolases"/>
    <property type="match status" value="1"/>
</dbReference>
<dbReference type="PROSITE" id="PS01028">
    <property type="entry name" value="DEHYDROQUINASE_I"/>
    <property type="match status" value="1"/>
</dbReference>
<dbReference type="PROSITE" id="PS00104">
    <property type="entry name" value="EPSP_SYNTHASE_1"/>
    <property type="match status" value="1"/>
</dbReference>
<dbReference type="PROSITE" id="PS00885">
    <property type="entry name" value="EPSP_SYNTHASE_2"/>
    <property type="match status" value="1"/>
</dbReference>
<dbReference type="PROSITE" id="PS01128">
    <property type="entry name" value="SHIKIMATE_KINASE"/>
    <property type="match status" value="1"/>
</dbReference>
<evidence type="ECO:0000255" key="1">
    <source>
        <dbReference type="HAMAP-Rule" id="MF_03143"/>
    </source>
</evidence>